<accession>P77257</accession>
<accession>P76879</accession>
<feature type="chain" id="PRO_0000092321" description="Autoinducer 2 import ATP-binding protein LsrA">
    <location>
        <begin position="1"/>
        <end position="511"/>
    </location>
</feature>
<feature type="domain" description="ABC transporter 1" evidence="1">
    <location>
        <begin position="12"/>
        <end position="240"/>
    </location>
</feature>
<feature type="domain" description="ABC transporter 2" evidence="1">
    <location>
        <begin position="240"/>
        <end position="503"/>
    </location>
</feature>
<feature type="binding site" evidence="1">
    <location>
        <begin position="44"/>
        <end position="51"/>
    </location>
    <ligand>
        <name>ATP</name>
        <dbReference type="ChEBI" id="CHEBI:30616"/>
    </ligand>
</feature>
<dbReference type="EC" id="7.6.2.13" evidence="8"/>
<dbReference type="EMBL" id="AF089855">
    <property type="protein sequence ID" value="AAC61747.1"/>
    <property type="molecule type" value="Genomic_DNA"/>
</dbReference>
<dbReference type="EMBL" id="U00096">
    <property type="protein sequence ID" value="AAC74586.1"/>
    <property type="molecule type" value="Genomic_DNA"/>
</dbReference>
<dbReference type="EMBL" id="AP009048">
    <property type="protein sequence ID" value="BAA15200.1"/>
    <property type="molecule type" value="Genomic_DNA"/>
</dbReference>
<dbReference type="PIR" id="D64905">
    <property type="entry name" value="D64905"/>
</dbReference>
<dbReference type="RefSeq" id="NP_416030.1">
    <property type="nucleotide sequence ID" value="NC_000913.3"/>
</dbReference>
<dbReference type="RefSeq" id="WP_001194860.1">
    <property type="nucleotide sequence ID" value="NZ_SSZK01000001.1"/>
</dbReference>
<dbReference type="SMR" id="P77257"/>
<dbReference type="BioGRID" id="4260226">
    <property type="interactions" value="18"/>
</dbReference>
<dbReference type="BioGRID" id="850052">
    <property type="interactions" value="1"/>
</dbReference>
<dbReference type="ComplexPortal" id="CPX-4315">
    <property type="entry name" value="Autoinducer-2 ABC transporter complex"/>
</dbReference>
<dbReference type="FunCoup" id="P77257">
    <property type="interactions" value="245"/>
</dbReference>
<dbReference type="IntAct" id="P77257">
    <property type="interactions" value="3"/>
</dbReference>
<dbReference type="STRING" id="511145.b1513"/>
<dbReference type="TCDB" id="3.A.1.2.8">
    <property type="family name" value="the atp-binding cassette (abc) superfamily"/>
</dbReference>
<dbReference type="jPOST" id="P77257"/>
<dbReference type="PaxDb" id="511145-b1513"/>
<dbReference type="EnsemblBacteria" id="AAC74586">
    <property type="protein sequence ID" value="AAC74586"/>
    <property type="gene ID" value="b1513"/>
</dbReference>
<dbReference type="GeneID" id="945680"/>
<dbReference type="KEGG" id="ecj:JW1506"/>
<dbReference type="KEGG" id="eco:b1513"/>
<dbReference type="KEGG" id="ecoc:C3026_08750"/>
<dbReference type="PATRIC" id="fig|1411691.4.peg.754"/>
<dbReference type="EchoBASE" id="EB3567"/>
<dbReference type="eggNOG" id="COG1129">
    <property type="taxonomic scope" value="Bacteria"/>
</dbReference>
<dbReference type="HOGENOM" id="CLU_000604_92_3_6"/>
<dbReference type="InParanoid" id="P77257"/>
<dbReference type="OMA" id="PQDRHKH"/>
<dbReference type="OrthoDB" id="9805029at2"/>
<dbReference type="PhylomeDB" id="P77257"/>
<dbReference type="BioCyc" id="EcoCyc:YDEX-MONOMER"/>
<dbReference type="BioCyc" id="MetaCyc:YDEX-MONOMER"/>
<dbReference type="PHI-base" id="PHI:9992"/>
<dbReference type="PRO" id="PR:P77257"/>
<dbReference type="Proteomes" id="UP000000625">
    <property type="component" value="Chromosome"/>
</dbReference>
<dbReference type="GO" id="GO:0055052">
    <property type="term" value="C:ATP-binding cassette (ABC) transporter complex, substrate-binding subunit-containing"/>
    <property type="evidence" value="ECO:0000303"/>
    <property type="project" value="ComplexPortal"/>
</dbReference>
<dbReference type="GO" id="GO:0016020">
    <property type="term" value="C:membrane"/>
    <property type="evidence" value="ECO:0000303"/>
    <property type="project" value="ComplexPortal"/>
</dbReference>
<dbReference type="GO" id="GO:0005524">
    <property type="term" value="F:ATP binding"/>
    <property type="evidence" value="ECO:0007669"/>
    <property type="project" value="UniProtKB-KW"/>
</dbReference>
<dbReference type="GO" id="GO:0016887">
    <property type="term" value="F:ATP hydrolysis activity"/>
    <property type="evidence" value="ECO:0007669"/>
    <property type="project" value="InterPro"/>
</dbReference>
<dbReference type="GO" id="GO:1905887">
    <property type="term" value="P:autoinducer AI-2 transmembrane transport"/>
    <property type="evidence" value="ECO:0000303"/>
    <property type="project" value="ComplexPortal"/>
</dbReference>
<dbReference type="GO" id="GO:0009372">
    <property type="term" value="P:quorum sensing"/>
    <property type="evidence" value="ECO:0000303"/>
    <property type="project" value="ComplexPortal"/>
</dbReference>
<dbReference type="CDD" id="cd03216">
    <property type="entry name" value="ABC_Carb_Monos_I"/>
    <property type="match status" value="1"/>
</dbReference>
<dbReference type="CDD" id="cd03215">
    <property type="entry name" value="ABC_Carb_Monos_II"/>
    <property type="match status" value="1"/>
</dbReference>
<dbReference type="Gene3D" id="3.40.50.300">
    <property type="entry name" value="P-loop containing nucleotide triphosphate hydrolases"/>
    <property type="match status" value="2"/>
</dbReference>
<dbReference type="InterPro" id="IPR003593">
    <property type="entry name" value="AAA+_ATPase"/>
</dbReference>
<dbReference type="InterPro" id="IPR050107">
    <property type="entry name" value="ABC_carbohydrate_import_ATPase"/>
</dbReference>
<dbReference type="InterPro" id="IPR003439">
    <property type="entry name" value="ABC_transporter-like_ATP-bd"/>
</dbReference>
<dbReference type="InterPro" id="IPR017871">
    <property type="entry name" value="ABC_transporter-like_CS"/>
</dbReference>
<dbReference type="InterPro" id="IPR027417">
    <property type="entry name" value="P-loop_NTPase"/>
</dbReference>
<dbReference type="NCBIfam" id="NF011967">
    <property type="entry name" value="PRK15439.1"/>
    <property type="match status" value="1"/>
</dbReference>
<dbReference type="PANTHER" id="PTHR43790:SF2">
    <property type="entry name" value="AUTOINDUCER 2 IMPORT ATP-BINDING PROTEIN LSRA"/>
    <property type="match status" value="1"/>
</dbReference>
<dbReference type="PANTHER" id="PTHR43790">
    <property type="entry name" value="CARBOHYDRATE TRANSPORT ATP-BINDING PROTEIN MG119-RELATED"/>
    <property type="match status" value="1"/>
</dbReference>
<dbReference type="Pfam" id="PF00005">
    <property type="entry name" value="ABC_tran"/>
    <property type="match status" value="2"/>
</dbReference>
<dbReference type="SMART" id="SM00382">
    <property type="entry name" value="AAA"/>
    <property type="match status" value="2"/>
</dbReference>
<dbReference type="SUPFAM" id="SSF52540">
    <property type="entry name" value="P-loop containing nucleoside triphosphate hydrolases"/>
    <property type="match status" value="2"/>
</dbReference>
<dbReference type="PROSITE" id="PS00211">
    <property type="entry name" value="ABC_TRANSPORTER_1"/>
    <property type="match status" value="1"/>
</dbReference>
<dbReference type="PROSITE" id="PS50893">
    <property type="entry name" value="ABC_TRANSPORTER_2"/>
    <property type="match status" value="2"/>
</dbReference>
<keyword id="KW-0067">ATP-binding</keyword>
<keyword id="KW-0997">Cell inner membrane</keyword>
<keyword id="KW-1003">Cell membrane</keyword>
<keyword id="KW-0472">Membrane</keyword>
<keyword id="KW-0547">Nucleotide-binding</keyword>
<keyword id="KW-1185">Reference proteome</keyword>
<keyword id="KW-0677">Repeat</keyword>
<keyword id="KW-1278">Translocase</keyword>
<keyword id="KW-0813">Transport</keyword>
<organism>
    <name type="scientific">Escherichia coli (strain K12)</name>
    <dbReference type="NCBI Taxonomy" id="83333"/>
    <lineage>
        <taxon>Bacteria</taxon>
        <taxon>Pseudomonadati</taxon>
        <taxon>Pseudomonadota</taxon>
        <taxon>Gammaproteobacteria</taxon>
        <taxon>Enterobacterales</taxon>
        <taxon>Enterobacteriaceae</taxon>
        <taxon>Escherichia</taxon>
    </lineage>
</organism>
<reference key="1">
    <citation type="submission" date="1998-09" db="EMBL/GenBank/DDBJ databases">
        <authorList>
            <person name="Kwon H.B."/>
            <person name="Lee S.H."/>
            <person name="Choe M.H."/>
        </authorList>
    </citation>
    <scope>NUCLEOTIDE SEQUENCE [GENOMIC DNA]</scope>
</reference>
<reference key="2">
    <citation type="journal article" date="1996" name="DNA Res.">
        <title>A 570-kb DNA sequence of the Escherichia coli K-12 genome corresponding to the 28.0-40.1 min region on the linkage map.</title>
        <authorList>
            <person name="Aiba H."/>
            <person name="Baba T."/>
            <person name="Fujita K."/>
            <person name="Hayashi K."/>
            <person name="Inada T."/>
            <person name="Isono K."/>
            <person name="Itoh T."/>
            <person name="Kasai H."/>
            <person name="Kashimoto K."/>
            <person name="Kimura S."/>
            <person name="Kitakawa M."/>
            <person name="Kitagawa M."/>
            <person name="Makino K."/>
            <person name="Miki T."/>
            <person name="Mizobuchi K."/>
            <person name="Mori H."/>
            <person name="Mori T."/>
            <person name="Motomura K."/>
            <person name="Nakade S."/>
            <person name="Nakamura Y."/>
            <person name="Nashimoto H."/>
            <person name="Nishio Y."/>
            <person name="Oshima T."/>
            <person name="Saito N."/>
            <person name="Sampei G."/>
            <person name="Seki Y."/>
            <person name="Sivasundaram S."/>
            <person name="Tagami H."/>
            <person name="Takeda J."/>
            <person name="Takemoto K."/>
            <person name="Takeuchi Y."/>
            <person name="Wada C."/>
            <person name="Yamamoto Y."/>
            <person name="Horiuchi T."/>
        </authorList>
    </citation>
    <scope>NUCLEOTIDE SEQUENCE [LARGE SCALE GENOMIC DNA]</scope>
    <source>
        <strain>K12 / W3110 / ATCC 27325 / DSM 5911</strain>
    </source>
</reference>
<reference key="3">
    <citation type="journal article" date="1997" name="Science">
        <title>The complete genome sequence of Escherichia coli K-12.</title>
        <authorList>
            <person name="Blattner F.R."/>
            <person name="Plunkett G. III"/>
            <person name="Bloch C.A."/>
            <person name="Perna N.T."/>
            <person name="Burland V."/>
            <person name="Riley M."/>
            <person name="Collado-Vides J."/>
            <person name="Glasner J.D."/>
            <person name="Rode C.K."/>
            <person name="Mayhew G.F."/>
            <person name="Gregor J."/>
            <person name="Davis N.W."/>
            <person name="Kirkpatrick H.A."/>
            <person name="Goeden M.A."/>
            <person name="Rose D.J."/>
            <person name="Mau B."/>
            <person name="Shao Y."/>
        </authorList>
    </citation>
    <scope>NUCLEOTIDE SEQUENCE [LARGE SCALE GENOMIC DNA]</scope>
    <source>
        <strain>K12 / MG1655 / ATCC 47076</strain>
    </source>
</reference>
<reference key="4">
    <citation type="journal article" date="2006" name="Mol. Syst. Biol.">
        <title>Highly accurate genome sequences of Escherichia coli K-12 strains MG1655 and W3110.</title>
        <authorList>
            <person name="Hayashi K."/>
            <person name="Morooka N."/>
            <person name="Yamamoto Y."/>
            <person name="Fujita K."/>
            <person name="Isono K."/>
            <person name="Choi S."/>
            <person name="Ohtsubo E."/>
            <person name="Baba T."/>
            <person name="Wanner B.L."/>
            <person name="Mori H."/>
            <person name="Horiuchi T."/>
        </authorList>
    </citation>
    <scope>NUCLEOTIDE SEQUENCE [LARGE SCALE GENOMIC DNA]</scope>
    <source>
        <strain>K12 / W3110 / ATCC 27325 / DSM 5911</strain>
    </source>
</reference>
<reference key="5">
    <citation type="journal article" date="2004" name="Res. Microbiol.">
        <title>Scanning the Escherichia coli chromosome by random transposon mutagenesis and multiple phenotypic screening.</title>
        <authorList>
            <person name="Serina S."/>
            <person name="Nozza F."/>
            <person name="Nicastro G."/>
            <person name="Faggioni F."/>
            <person name="Mottl H."/>
            <person name="Deho G."/>
            <person name="Polissi A."/>
        </authorList>
    </citation>
    <scope>DISRUPTION PHENOTYPE</scope>
    <source>
        <strain>CC118</strain>
    </source>
</reference>
<reference key="6">
    <citation type="journal article" date="2005" name="J. Bacteriol.">
        <title>Regulation of uptake and processing of the quorum-sensing autoinducer AI-2 in Escherichia coli.</title>
        <authorList>
            <person name="Xavier K.B."/>
            <person name="Bassler B.L."/>
        </authorList>
    </citation>
    <scope>FUNCTION IN AI-2 IMPORT</scope>
    <scope>INDUCTION</scope>
    <source>
        <strain>K12 / MG1655 / ATCC 47076</strain>
    </source>
</reference>
<reference key="7">
    <citation type="journal article" date="2005" name="J. Bacteriol.">
        <title>Cyclic AMP (cAMP) and cAMP receptor protein influence both synthesis and uptake of extracellular autoinducer 2 in Escherichia coli.</title>
        <authorList>
            <person name="Wang L."/>
            <person name="Hashimoto Y."/>
            <person name="Tsao C.-Y."/>
            <person name="Valdes J.J."/>
            <person name="Bentley W.E."/>
        </authorList>
    </citation>
    <scope>INDUCTION</scope>
    <source>
        <strain>K12 / W3110 / ATCC 27325 / DSM 5911</strain>
    </source>
</reference>
<reference key="8">
    <citation type="journal article" date="2006" name="Mol. Syst. Biol.">
        <title>Construction of Escherichia coli K-12 in-frame, single-gene knockout mutants: the Keio collection.</title>
        <authorList>
            <person name="Baba T."/>
            <person name="Ara T."/>
            <person name="Hasegawa M."/>
            <person name="Takai Y."/>
            <person name="Okumura Y."/>
            <person name="Baba M."/>
            <person name="Datsenko K.A."/>
            <person name="Tomita M."/>
            <person name="Wanner B.L."/>
            <person name="Mori H."/>
        </authorList>
    </citation>
    <scope>DISRUPTION PHENOTYPE</scope>
    <source>
        <strain>K12 / BW25113</strain>
    </source>
</reference>
<reference key="9">
    <citation type="journal article" date="2018" name="MBio">
        <title>The essential genome of Escherichia coli K-12.</title>
        <authorList>
            <person name="Goodall E.C.A."/>
            <person name="Robinson A."/>
            <person name="Johnston I.G."/>
            <person name="Jabbari S."/>
            <person name="Turner K.A."/>
            <person name="Cunningham A.F."/>
            <person name="Lund P.A."/>
            <person name="Cole J.A."/>
            <person name="Henderson I.R."/>
        </authorList>
    </citation>
    <scope>DISRUPTION PHENOTYPE</scope>
    <source>
        <strain>K12 / BW25113</strain>
    </source>
</reference>
<proteinExistence type="evidence at protein level"/>
<gene>
    <name type="primary">lsrA</name>
    <name type="synonym">ego</name>
    <name type="synonym">ydeX</name>
    <name type="ordered locus">b1513</name>
    <name type="ordered locus">JW1506</name>
</gene>
<evidence type="ECO:0000255" key="1">
    <source>
        <dbReference type="PROSITE-ProRule" id="PRU00434"/>
    </source>
</evidence>
<evidence type="ECO:0000269" key="2">
    <source>
    </source>
</evidence>
<evidence type="ECO:0000269" key="3">
    <source>
    </source>
</evidence>
<evidence type="ECO:0000269" key="4">
    <source>
    </source>
</evidence>
<evidence type="ECO:0000269" key="5">
    <source>
    </source>
</evidence>
<evidence type="ECO:0000269" key="6">
    <source>
    </source>
</evidence>
<evidence type="ECO:0000305" key="7"/>
<evidence type="ECO:0000305" key="8">
    <source>
    </source>
</evidence>
<protein>
    <recommendedName>
        <fullName>Autoinducer 2 import ATP-binding protein LsrA</fullName>
        <shortName>AI-2 import ATP-binding protein LsrA</shortName>
        <ecNumber evidence="8">7.6.2.13</ecNumber>
    </recommendedName>
    <alternativeName>
        <fullName>EGO10A</fullName>
    </alternativeName>
</protein>
<comment type="function">
    <text evidence="8">Part of the ABC transporter complex LsrABCD involved in autoinducer 2 (AI-2) import. Responsible for energy coupling to the transport system.</text>
</comment>
<comment type="catalytic activity">
    <reaction evidence="8">
        <text>ATP + H2O + (2R,4S)-2-methyl-2,3,3,4-tetrahydroxytetrahydrofuran-[AI-2-binding protein]Side 1 = ADP + phosphate + (2R,4S)-2-methyl-2,3,3,4-tetrahydroxytetrahydrofuranSide 2 + [AI-2-binding protein]Side 1.</text>
        <dbReference type="EC" id="7.6.2.13"/>
    </reaction>
</comment>
<comment type="subunit">
    <text evidence="8">The complex is composed of two ATP-binding proteins (LsrA), two transmembrane proteins (LsrC and LsrD) and a solute-binding protein (LsrB).</text>
</comment>
<comment type="subcellular location">
    <subcellularLocation>
        <location evidence="7">Cell inner membrane</location>
        <topology evidence="7">Peripheral membrane protein</topology>
    </subcellularLocation>
</comment>
<comment type="induction">
    <text evidence="3 4">In the absence of AI-2, repressed by LsrR. Induced by AI-2, via release of the LsrR repressor. In the absence of glucose, induced by cAMP-CRP by direct binding to the upstream region of the lsr promoter.</text>
</comment>
<comment type="disruption phenotype">
    <text evidence="2 5 6">Serina et al. reported that the transposon insertion mutant is unable to grow in rich medium at optimal temperature (37 degrees Celsius), whereas it can grow in minimal medium at 37 degrees Celsius and in LD broth at 15 degrees Celsius (PubMed:15380559). In contrast, other studies showed that the gene is not essential for growth in Luria broth (LB) medium at 37 degrees Celsius (PubMed:16738554, PubMed:29463657).</text>
</comment>
<comment type="similarity">
    <text evidence="7">Belongs to the ABC transporter superfamily. AI-2 autoinducer porter (TC 3.A.1.2.8) family.</text>
</comment>
<name>LSRA_ECOLI</name>
<sequence>MQTSDTRALPLLCARSVYKQYSGVNVLKGIDFTLHQGEVHALLGGNGAGKSTLMKIIAGITPADSGTLEIEGNNYVRLTPVHAHQLGIYLVPQEPLLFPSLSIKENILFGLAKKQLSMQKMKNLLAALGCQFDLHSLAGSLDVADRQMVEILRGLMRDSRILILDEPTASLTPAETERLFSRLQELLATGVGIVFISHKLPEIRQIADRISVMRDGTIALSGKTSELSTDDIIQAITPAVREKSLSASQKLWLELPGNRPQHAAGTPVLTLENLTGEGFRNVSLTLNAGEILGLAGLVGAGRTELAETLYGLRTLRGGRIMLNGKEINKLSTGERLLRGLVYLPEDRQSSGLNLDASLAWNVCALTHNLRGFWAKTAKDNATLERYRRALNIKFNQPEQAARTLSGGNQQKILIAKCLEASPQVLIVDEPTRGVDVSARNDIYQLLRSIAAQNVAVLLISSDLEEIELMADRVYVMHQGEITHSALTERDINVETIMRVAFGDSQRQEASC</sequence>